<evidence type="ECO:0000255" key="1">
    <source>
        <dbReference type="HAMAP-Rule" id="MF_01291"/>
    </source>
</evidence>
<keyword id="KW-0456">Lyase</keyword>
<keyword id="KW-0460">Magnesium</keyword>
<keyword id="KW-0479">Metal-binding</keyword>
<comment type="function">
    <text evidence="1">Catalyzes the reversible retro-aldol cleavage of both 5-keto-4-deoxy-D-glucarate and 2-keto-3-deoxy-D-glucarate to pyruvate and tartronic semialdehyde.</text>
</comment>
<comment type="catalytic activity">
    <reaction evidence="1">
        <text>5-dehydro-4-deoxy-D-glucarate = 2-hydroxy-3-oxopropanoate + pyruvate</text>
        <dbReference type="Rhea" id="RHEA:27726"/>
        <dbReference type="ChEBI" id="CHEBI:15361"/>
        <dbReference type="ChEBI" id="CHEBI:42819"/>
        <dbReference type="ChEBI" id="CHEBI:57978"/>
    </reaction>
</comment>
<comment type="catalytic activity">
    <reaction evidence="1">
        <text>2-dehydro-3-deoxy-D-glucarate = 2-hydroxy-3-oxopropanoate + pyruvate</text>
        <dbReference type="Rhea" id="RHEA:10268"/>
        <dbReference type="ChEBI" id="CHEBI:15361"/>
        <dbReference type="ChEBI" id="CHEBI:57978"/>
        <dbReference type="ChEBI" id="CHEBI:58098"/>
        <dbReference type="EC" id="4.1.2.20"/>
    </reaction>
</comment>
<comment type="cofactor">
    <cofactor evidence="1">
        <name>Mg(2+)</name>
        <dbReference type="ChEBI" id="CHEBI:18420"/>
    </cofactor>
    <text evidence="1">Binds 1 Mg(2+) ion per subunit.</text>
</comment>
<comment type="pathway">
    <text evidence="1">Carbohydrate acid metabolism; galactarate degradation; D-glycerate from galactarate: step 2/3.</text>
</comment>
<comment type="subunit">
    <text evidence="1">Homohexamer; trimer of dimers.</text>
</comment>
<comment type="similarity">
    <text evidence="1">Belongs to the HpcH/HpaI aldolase family. KDGluc aldolase subfamily.</text>
</comment>
<organism>
    <name type="scientific">Shigella boydii serotype 4 (strain Sb227)</name>
    <dbReference type="NCBI Taxonomy" id="300268"/>
    <lineage>
        <taxon>Bacteria</taxon>
        <taxon>Pseudomonadati</taxon>
        <taxon>Pseudomonadota</taxon>
        <taxon>Gammaproteobacteria</taxon>
        <taxon>Enterobacterales</taxon>
        <taxon>Enterobacteriaceae</taxon>
        <taxon>Shigella</taxon>
    </lineage>
</organism>
<dbReference type="EC" id="4.1.2.20" evidence="1"/>
<dbReference type="EMBL" id="CP000036">
    <property type="protein sequence ID" value="ABB67503.1"/>
    <property type="molecule type" value="Genomic_DNA"/>
</dbReference>
<dbReference type="RefSeq" id="WP_001058227.1">
    <property type="nucleotide sequence ID" value="NC_007613.1"/>
</dbReference>
<dbReference type="SMR" id="Q31WQ5"/>
<dbReference type="GeneID" id="93778860"/>
<dbReference type="KEGG" id="sbo:SBO_2991"/>
<dbReference type="HOGENOM" id="CLU_059964_1_0_6"/>
<dbReference type="UniPathway" id="UPA00565">
    <property type="reaction ID" value="UER00630"/>
</dbReference>
<dbReference type="Proteomes" id="UP000007067">
    <property type="component" value="Chromosome"/>
</dbReference>
<dbReference type="GO" id="GO:0005737">
    <property type="term" value="C:cytoplasm"/>
    <property type="evidence" value="ECO:0007669"/>
    <property type="project" value="TreeGrafter"/>
</dbReference>
<dbReference type="GO" id="GO:0008672">
    <property type="term" value="F:2-dehydro-3-deoxyglucarate aldolase activity"/>
    <property type="evidence" value="ECO:0007669"/>
    <property type="project" value="UniProtKB-UniRule"/>
</dbReference>
<dbReference type="GO" id="GO:0000287">
    <property type="term" value="F:magnesium ion binding"/>
    <property type="evidence" value="ECO:0007669"/>
    <property type="project" value="UniProtKB-UniRule"/>
</dbReference>
<dbReference type="GO" id="GO:0042838">
    <property type="term" value="P:D-glucarate catabolic process"/>
    <property type="evidence" value="ECO:0007669"/>
    <property type="project" value="UniProtKB-UniRule"/>
</dbReference>
<dbReference type="GO" id="GO:0046392">
    <property type="term" value="P:galactarate catabolic process"/>
    <property type="evidence" value="ECO:0007669"/>
    <property type="project" value="UniProtKB-UniRule"/>
</dbReference>
<dbReference type="FunFam" id="3.20.20.60:FF:000004">
    <property type="entry name" value="5-keto-4-deoxy-D-glucarate aldolase"/>
    <property type="match status" value="1"/>
</dbReference>
<dbReference type="Gene3D" id="3.20.20.60">
    <property type="entry name" value="Phosphoenolpyruvate-binding domains"/>
    <property type="match status" value="1"/>
</dbReference>
<dbReference type="HAMAP" id="MF_01291">
    <property type="entry name" value="KDGluc_aldolase"/>
    <property type="match status" value="1"/>
</dbReference>
<dbReference type="InterPro" id="IPR005000">
    <property type="entry name" value="Aldolase/citrate-lyase_domain"/>
</dbReference>
<dbReference type="InterPro" id="IPR017648">
    <property type="entry name" value="GarL"/>
</dbReference>
<dbReference type="InterPro" id="IPR050251">
    <property type="entry name" value="HpcH-HpaI_aldolase"/>
</dbReference>
<dbReference type="InterPro" id="IPR015813">
    <property type="entry name" value="Pyrv/PenolPyrv_kinase-like_dom"/>
</dbReference>
<dbReference type="InterPro" id="IPR040442">
    <property type="entry name" value="Pyrv_kinase-like_dom_sf"/>
</dbReference>
<dbReference type="NCBIfam" id="TIGR03239">
    <property type="entry name" value="GarL"/>
    <property type="match status" value="1"/>
</dbReference>
<dbReference type="NCBIfam" id="NF007849">
    <property type="entry name" value="PRK10558.1"/>
    <property type="match status" value="1"/>
</dbReference>
<dbReference type="PANTHER" id="PTHR30502">
    <property type="entry name" value="2-KETO-3-DEOXY-L-RHAMNONATE ALDOLASE"/>
    <property type="match status" value="1"/>
</dbReference>
<dbReference type="PANTHER" id="PTHR30502:SF4">
    <property type="entry name" value="5-KETO-4-DEOXY-D-GLUCARATE ALDOLASE"/>
    <property type="match status" value="1"/>
</dbReference>
<dbReference type="Pfam" id="PF03328">
    <property type="entry name" value="HpcH_HpaI"/>
    <property type="match status" value="1"/>
</dbReference>
<dbReference type="SUPFAM" id="SSF51621">
    <property type="entry name" value="Phosphoenolpyruvate/pyruvate domain"/>
    <property type="match status" value="1"/>
</dbReference>
<feature type="chain" id="PRO_0000353160" description="5-keto-4-deoxy-D-glucarate aldolase">
    <location>
        <begin position="1"/>
        <end position="256"/>
    </location>
</feature>
<feature type="active site" description="Proton acceptor" evidence="1">
    <location>
        <position position="50"/>
    </location>
</feature>
<feature type="binding site" evidence="1">
    <location>
        <position position="151"/>
    </location>
    <ligand>
        <name>substrate</name>
    </ligand>
</feature>
<feature type="binding site" evidence="1">
    <location>
        <position position="153"/>
    </location>
    <ligand>
        <name>Mg(2+)</name>
        <dbReference type="ChEBI" id="CHEBI:18420"/>
    </ligand>
</feature>
<feature type="binding site" evidence="1">
    <location>
        <position position="178"/>
    </location>
    <ligand>
        <name>substrate</name>
    </ligand>
</feature>
<feature type="binding site" evidence="1">
    <location>
        <position position="179"/>
    </location>
    <ligand>
        <name>Mg(2+)</name>
        <dbReference type="ChEBI" id="CHEBI:18420"/>
    </ligand>
</feature>
<feature type="binding site" evidence="1">
    <location>
        <position position="179"/>
    </location>
    <ligand>
        <name>substrate</name>
    </ligand>
</feature>
<feature type="site" description="Transition state stabilizer" evidence="1">
    <location>
        <position position="75"/>
    </location>
</feature>
<feature type="site" description="Increases basicity of active site His" evidence="1">
    <location>
        <position position="89"/>
    </location>
</feature>
<reference key="1">
    <citation type="journal article" date="2005" name="Nucleic Acids Res.">
        <title>Genome dynamics and diversity of Shigella species, the etiologic agents of bacillary dysentery.</title>
        <authorList>
            <person name="Yang F."/>
            <person name="Yang J."/>
            <person name="Zhang X."/>
            <person name="Chen L."/>
            <person name="Jiang Y."/>
            <person name="Yan Y."/>
            <person name="Tang X."/>
            <person name="Wang J."/>
            <person name="Xiong Z."/>
            <person name="Dong J."/>
            <person name="Xue Y."/>
            <person name="Zhu Y."/>
            <person name="Xu X."/>
            <person name="Sun L."/>
            <person name="Chen S."/>
            <person name="Nie H."/>
            <person name="Peng J."/>
            <person name="Xu J."/>
            <person name="Wang Y."/>
            <person name="Yuan Z."/>
            <person name="Wen Y."/>
            <person name="Yao Z."/>
            <person name="Shen Y."/>
            <person name="Qiang B."/>
            <person name="Hou Y."/>
            <person name="Yu J."/>
            <person name="Jin Q."/>
        </authorList>
    </citation>
    <scope>NUCLEOTIDE SEQUENCE [LARGE SCALE GENOMIC DNA]</scope>
    <source>
        <strain>Sb227</strain>
    </source>
</reference>
<gene>
    <name evidence="1" type="primary">garL</name>
    <name type="ordered locus">SBO_2991</name>
</gene>
<sequence length="256" mass="27399">MNNDVFPNKFKAALAAKQVQIGCWSALSNPISTEVLGLAGFDWLVLDGEHAPNDISTFIPQLMALKGSASAPVVRVPTNEPVIIKRLLDIGFYNFLIPFVETKEEAEQAVASTRYPPEGIRGVSVSHRANMFGTVADYFAQSNKNITILVQIESQQGVDNVDAIAATEGVDGIFVGPSDLAAALGHLGNASHPDVQKAIQHIFNRASAHGKPSGILAPVEADARRYLEWGATFVAVGSDLGVFRSATQKLADTFKK</sequence>
<name>GARL_SHIBS</name>
<accession>Q31WQ5</accession>
<proteinExistence type="inferred from homology"/>
<protein>
    <recommendedName>
        <fullName evidence="1">5-keto-4-deoxy-D-glucarate aldolase</fullName>
        <shortName evidence="1">KDGluc aldolase</shortName>
        <shortName evidence="1">KDGlucA</shortName>
        <ecNumber evidence="1">4.1.2.20</ecNumber>
    </recommendedName>
    <alternativeName>
        <fullName evidence="1">2-dehydro-3-deoxy-D-glucarate aldolase</fullName>
    </alternativeName>
    <alternativeName>
        <fullName evidence="1">2-keto-3-deoxy-D-glucarate aldolase</fullName>
    </alternativeName>
    <alternativeName>
        <fullName evidence="1">5-dehydro-4-deoxy-D-glucarate aldolase</fullName>
    </alternativeName>
    <alternativeName>
        <fullName evidence="1">Alpha-keto-beta-deoxy-D-glucarate aldolase</fullName>
    </alternativeName>
</protein>